<sequence length="193" mass="21367">MSGIRLIVGLGNPGPEYEKTRHNAGFWLVDELCWQFKGNWRSEGKFHGDVARIQIEGQDVWLLKPMTYMNLSGQAVLALAHFYKILPDEILVVHDELDLAPGVARFKQGGGHGGHNGLKDIAARLSSPAFWRLRLGIGHPGDKKEVANFVLKKPRAEEQQALDEAVLASLRELPRAVSGKMAEAMKALHTEAK</sequence>
<keyword id="KW-0963">Cytoplasm</keyword>
<keyword id="KW-0378">Hydrolase</keyword>
<keyword id="KW-1185">Reference proteome</keyword>
<keyword id="KW-0694">RNA-binding</keyword>
<keyword id="KW-0820">tRNA-binding</keyword>
<protein>
    <recommendedName>
        <fullName evidence="1">Peptidyl-tRNA hydrolase</fullName>
        <shortName evidence="1">Pth</shortName>
        <ecNumber evidence="1">3.1.1.29</ecNumber>
    </recommendedName>
</protein>
<proteinExistence type="inferred from homology"/>
<name>PTH_CHRVO</name>
<reference key="1">
    <citation type="journal article" date="2003" name="Proc. Natl. Acad. Sci. U.S.A.">
        <title>The complete genome sequence of Chromobacterium violaceum reveals remarkable and exploitable bacterial adaptability.</title>
        <authorList>
            <person name="Vasconcelos A.T.R."/>
            <person name="de Almeida D.F."/>
            <person name="Hungria M."/>
            <person name="Guimaraes C.T."/>
            <person name="Antonio R.V."/>
            <person name="Almeida F.C."/>
            <person name="de Almeida L.G.P."/>
            <person name="de Almeida R."/>
            <person name="Alves-Gomes J.A."/>
            <person name="Andrade E.M."/>
            <person name="Araripe J."/>
            <person name="de Araujo M.F.F."/>
            <person name="Astolfi-Filho S."/>
            <person name="Azevedo V."/>
            <person name="Baptista A.J."/>
            <person name="Bataus L.A.M."/>
            <person name="Batista J.S."/>
            <person name="Belo A."/>
            <person name="van den Berg C."/>
            <person name="Bogo M."/>
            <person name="Bonatto S."/>
            <person name="Bordignon J."/>
            <person name="Brigido M.M."/>
            <person name="Brito C.A."/>
            <person name="Brocchi M."/>
            <person name="Burity H.A."/>
            <person name="Camargo A.A."/>
            <person name="Cardoso D.D.P."/>
            <person name="Carneiro N.P."/>
            <person name="Carraro D.M."/>
            <person name="Carvalho C.M.B."/>
            <person name="Cascardo J.C.M."/>
            <person name="Cavada B.S."/>
            <person name="Chueire L.M.O."/>
            <person name="Creczynski-Pasa T.B."/>
            <person name="Cunha-Junior N.C."/>
            <person name="Fagundes N."/>
            <person name="Falcao C.L."/>
            <person name="Fantinatti F."/>
            <person name="Farias I.P."/>
            <person name="Felipe M.S.S."/>
            <person name="Ferrari L.P."/>
            <person name="Ferro J.A."/>
            <person name="Ferro M.I.T."/>
            <person name="Franco G.R."/>
            <person name="Freitas N.S.A."/>
            <person name="Furlan L.R."/>
            <person name="Gazzinelli R.T."/>
            <person name="Gomes E.A."/>
            <person name="Goncalves P.R."/>
            <person name="Grangeiro T.B."/>
            <person name="Grattapaglia D."/>
            <person name="Grisard E.C."/>
            <person name="Hanna E.S."/>
            <person name="Jardim S.N."/>
            <person name="Laurino J."/>
            <person name="Leoi L.C.T."/>
            <person name="Lima L.F.A."/>
            <person name="Loureiro M.F."/>
            <person name="Lyra M.C.C.P."/>
            <person name="Madeira H.M.F."/>
            <person name="Manfio G.P."/>
            <person name="Maranhao A.Q."/>
            <person name="Martins W.S."/>
            <person name="di Mauro S.M.Z."/>
            <person name="de Medeiros S.R.B."/>
            <person name="Meissner R.V."/>
            <person name="Moreira M.A.M."/>
            <person name="Nascimento F.F."/>
            <person name="Nicolas M.F."/>
            <person name="Oliveira J.G."/>
            <person name="Oliveira S.C."/>
            <person name="Paixao R.F.C."/>
            <person name="Parente J.A."/>
            <person name="Pedrosa F.O."/>
            <person name="Pena S.D.J."/>
            <person name="Pereira J.O."/>
            <person name="Pereira M."/>
            <person name="Pinto L.S.R.C."/>
            <person name="Pinto L.S."/>
            <person name="Porto J.I.R."/>
            <person name="Potrich D.P."/>
            <person name="Ramalho-Neto C.E."/>
            <person name="Reis A.M.M."/>
            <person name="Rigo L.U."/>
            <person name="Rondinelli E."/>
            <person name="Santos E.B.P."/>
            <person name="Santos F.R."/>
            <person name="Schneider M.P.C."/>
            <person name="Seuanez H.N."/>
            <person name="Silva A.M.R."/>
            <person name="da Silva A.L.C."/>
            <person name="Silva D.W."/>
            <person name="Silva R."/>
            <person name="Simoes I.C."/>
            <person name="Simon D."/>
            <person name="Soares C.M.A."/>
            <person name="Soares R.B.A."/>
            <person name="Souza E.M."/>
            <person name="Souza K.R.L."/>
            <person name="Souza R.C."/>
            <person name="Steffens M.B.R."/>
            <person name="Steindel M."/>
            <person name="Teixeira S.R."/>
            <person name="Urmenyi T."/>
            <person name="Vettore A."/>
            <person name="Wassem R."/>
            <person name="Zaha A."/>
            <person name="Simpson A.J.G."/>
        </authorList>
    </citation>
    <scope>NUCLEOTIDE SEQUENCE [LARGE SCALE GENOMIC DNA]</scope>
    <source>
        <strain>ATCC 12472 / DSM 30191 / JCM 1249 / CCUG 213 / NBRC 12614 / NCIMB 9131 / NCTC 9757 / MK</strain>
    </source>
</reference>
<comment type="function">
    <text evidence="1">Hydrolyzes ribosome-free peptidyl-tRNAs (with 1 or more amino acids incorporated), which drop off the ribosome during protein synthesis, or as a result of ribosome stalling.</text>
</comment>
<comment type="function">
    <text evidence="1">Catalyzes the release of premature peptidyl moieties from peptidyl-tRNA molecules trapped in stalled 50S ribosomal subunits, and thus maintains levels of free tRNAs and 50S ribosomes.</text>
</comment>
<comment type="catalytic activity">
    <reaction evidence="1">
        <text>an N-acyl-L-alpha-aminoacyl-tRNA + H2O = an N-acyl-L-amino acid + a tRNA + H(+)</text>
        <dbReference type="Rhea" id="RHEA:54448"/>
        <dbReference type="Rhea" id="RHEA-COMP:10123"/>
        <dbReference type="Rhea" id="RHEA-COMP:13883"/>
        <dbReference type="ChEBI" id="CHEBI:15377"/>
        <dbReference type="ChEBI" id="CHEBI:15378"/>
        <dbReference type="ChEBI" id="CHEBI:59874"/>
        <dbReference type="ChEBI" id="CHEBI:78442"/>
        <dbReference type="ChEBI" id="CHEBI:138191"/>
        <dbReference type="EC" id="3.1.1.29"/>
    </reaction>
</comment>
<comment type="subunit">
    <text evidence="1">Monomer.</text>
</comment>
<comment type="subcellular location">
    <subcellularLocation>
        <location evidence="1">Cytoplasm</location>
    </subcellularLocation>
</comment>
<comment type="similarity">
    <text evidence="1">Belongs to the PTH family.</text>
</comment>
<organism>
    <name type="scientific">Chromobacterium violaceum (strain ATCC 12472 / DSM 30191 / JCM 1249 / CCUG 213 / NBRC 12614 / NCIMB 9131 / NCTC 9757 / MK)</name>
    <dbReference type="NCBI Taxonomy" id="243365"/>
    <lineage>
        <taxon>Bacteria</taxon>
        <taxon>Pseudomonadati</taxon>
        <taxon>Pseudomonadota</taxon>
        <taxon>Betaproteobacteria</taxon>
        <taxon>Neisseriales</taxon>
        <taxon>Chromobacteriaceae</taxon>
        <taxon>Chromobacterium</taxon>
    </lineage>
</organism>
<feature type="chain" id="PRO_0000187721" description="Peptidyl-tRNA hydrolase">
    <location>
        <begin position="1"/>
        <end position="193"/>
    </location>
</feature>
<feature type="active site" description="Proton acceptor" evidence="1">
    <location>
        <position position="22"/>
    </location>
</feature>
<feature type="binding site" evidence="1">
    <location>
        <position position="17"/>
    </location>
    <ligand>
        <name>tRNA</name>
        <dbReference type="ChEBI" id="CHEBI:17843"/>
    </ligand>
</feature>
<feature type="binding site" evidence="1">
    <location>
        <position position="68"/>
    </location>
    <ligand>
        <name>tRNA</name>
        <dbReference type="ChEBI" id="CHEBI:17843"/>
    </ligand>
</feature>
<feature type="binding site" evidence="1">
    <location>
        <position position="70"/>
    </location>
    <ligand>
        <name>tRNA</name>
        <dbReference type="ChEBI" id="CHEBI:17843"/>
    </ligand>
</feature>
<feature type="binding site" evidence="1">
    <location>
        <position position="116"/>
    </location>
    <ligand>
        <name>tRNA</name>
        <dbReference type="ChEBI" id="CHEBI:17843"/>
    </ligand>
</feature>
<feature type="site" description="Discriminates between blocked and unblocked aminoacyl-tRNA" evidence="1">
    <location>
        <position position="12"/>
    </location>
</feature>
<feature type="site" description="Stabilizes the basic form of H active site to accept a proton" evidence="1">
    <location>
        <position position="95"/>
    </location>
</feature>
<accession>Q7NQT1</accession>
<evidence type="ECO:0000255" key="1">
    <source>
        <dbReference type="HAMAP-Rule" id="MF_00083"/>
    </source>
</evidence>
<dbReference type="EC" id="3.1.1.29" evidence="1"/>
<dbReference type="EMBL" id="AE016825">
    <property type="protein sequence ID" value="AAQ61716.1"/>
    <property type="molecule type" value="Genomic_DNA"/>
</dbReference>
<dbReference type="RefSeq" id="WP_011137603.1">
    <property type="nucleotide sequence ID" value="NC_005085.1"/>
</dbReference>
<dbReference type="SMR" id="Q7NQT1"/>
<dbReference type="STRING" id="243365.CV_4056"/>
<dbReference type="GeneID" id="66366485"/>
<dbReference type="KEGG" id="cvi:CV_4056"/>
<dbReference type="eggNOG" id="COG0193">
    <property type="taxonomic scope" value="Bacteria"/>
</dbReference>
<dbReference type="HOGENOM" id="CLU_062456_3_1_4"/>
<dbReference type="OrthoDB" id="9800507at2"/>
<dbReference type="Proteomes" id="UP000001424">
    <property type="component" value="Chromosome"/>
</dbReference>
<dbReference type="GO" id="GO:0005737">
    <property type="term" value="C:cytoplasm"/>
    <property type="evidence" value="ECO:0007669"/>
    <property type="project" value="UniProtKB-SubCell"/>
</dbReference>
<dbReference type="GO" id="GO:0004045">
    <property type="term" value="F:peptidyl-tRNA hydrolase activity"/>
    <property type="evidence" value="ECO:0007669"/>
    <property type="project" value="UniProtKB-UniRule"/>
</dbReference>
<dbReference type="GO" id="GO:0000049">
    <property type="term" value="F:tRNA binding"/>
    <property type="evidence" value="ECO:0007669"/>
    <property type="project" value="UniProtKB-UniRule"/>
</dbReference>
<dbReference type="GO" id="GO:0006515">
    <property type="term" value="P:protein quality control for misfolded or incompletely synthesized proteins"/>
    <property type="evidence" value="ECO:0007669"/>
    <property type="project" value="UniProtKB-UniRule"/>
</dbReference>
<dbReference type="GO" id="GO:0072344">
    <property type="term" value="P:rescue of stalled ribosome"/>
    <property type="evidence" value="ECO:0007669"/>
    <property type="project" value="UniProtKB-UniRule"/>
</dbReference>
<dbReference type="CDD" id="cd00462">
    <property type="entry name" value="PTH"/>
    <property type="match status" value="1"/>
</dbReference>
<dbReference type="FunFam" id="3.40.50.1470:FF:000001">
    <property type="entry name" value="Peptidyl-tRNA hydrolase"/>
    <property type="match status" value="1"/>
</dbReference>
<dbReference type="Gene3D" id="3.40.50.1470">
    <property type="entry name" value="Peptidyl-tRNA hydrolase"/>
    <property type="match status" value="1"/>
</dbReference>
<dbReference type="HAMAP" id="MF_00083">
    <property type="entry name" value="Pept_tRNA_hydro_bact"/>
    <property type="match status" value="1"/>
</dbReference>
<dbReference type="InterPro" id="IPR001328">
    <property type="entry name" value="Pept_tRNA_hydro"/>
</dbReference>
<dbReference type="InterPro" id="IPR018171">
    <property type="entry name" value="Pept_tRNA_hydro_CS"/>
</dbReference>
<dbReference type="InterPro" id="IPR036416">
    <property type="entry name" value="Pept_tRNA_hydro_sf"/>
</dbReference>
<dbReference type="NCBIfam" id="TIGR00447">
    <property type="entry name" value="pth"/>
    <property type="match status" value="1"/>
</dbReference>
<dbReference type="PANTHER" id="PTHR17224">
    <property type="entry name" value="PEPTIDYL-TRNA HYDROLASE"/>
    <property type="match status" value="1"/>
</dbReference>
<dbReference type="PANTHER" id="PTHR17224:SF1">
    <property type="entry name" value="PEPTIDYL-TRNA HYDROLASE"/>
    <property type="match status" value="1"/>
</dbReference>
<dbReference type="Pfam" id="PF01195">
    <property type="entry name" value="Pept_tRNA_hydro"/>
    <property type="match status" value="1"/>
</dbReference>
<dbReference type="SUPFAM" id="SSF53178">
    <property type="entry name" value="Peptidyl-tRNA hydrolase-like"/>
    <property type="match status" value="1"/>
</dbReference>
<dbReference type="PROSITE" id="PS01195">
    <property type="entry name" value="PEPT_TRNA_HYDROL_1"/>
    <property type="match status" value="1"/>
</dbReference>
<dbReference type="PROSITE" id="PS01196">
    <property type="entry name" value="PEPT_TRNA_HYDROL_2"/>
    <property type="match status" value="1"/>
</dbReference>
<gene>
    <name evidence="1" type="primary">pth</name>
    <name type="ordered locus">CV_4056</name>
</gene>